<name>NDB22_OLIMR</name>
<reference key="1">
    <citation type="journal article" date="2000" name="IUBMB Life">
        <title>Cloning and characterization of a novel cDNA sequence encoding the precursor of a novel venom peptide (BmKbpp) related to a bradykinin-potentiating peptide from Chinese scorpion Buthus martensii Karsch.</title>
        <authorList>
            <person name="Zeng X.-C."/>
            <person name="Li W.-X."/>
            <person name="Peng F."/>
            <person name="Zhu Z.-H."/>
        </authorList>
    </citation>
    <scope>NUCLEOTIDE SEQUENCE [MRNA]</scope>
    <source>
        <tissue>Venom gland</tissue>
    </source>
</reference>
<reference key="2">
    <citation type="journal article" date="2012" name="Peptides">
        <title>Characterization of BmKbpp, a multifunctional peptide from the Chinese scorpion Mesobuthus martensii Karsch: gaining insight into a new mechanism for the functional diversification of scorpion venom peptides.</title>
        <authorList>
            <person name="Zeng X.C."/>
            <person name="Wang S."/>
            <person name="Nie Y."/>
            <person name="Zhang L."/>
            <person name="Luo X."/>
        </authorList>
    </citation>
    <scope>SYNTHESIS OF 23-69</scope>
    <scope>SYNTHESIS OF C-TERMINAL PEPTIDE</scope>
    <scope>FUNCTION</scope>
</reference>
<reference key="3">
    <citation type="journal article" date="2005" name="IUBMB Life">
        <title>Scorpion venom peptides without disulfide bridges.</title>
        <authorList>
            <person name="Zeng X.C."/>
            <person name="Corzo G."/>
            <person name="Hahin R."/>
        </authorList>
    </citation>
    <scope>NOMENCLATURE</scope>
</reference>
<reference key="4">
    <citation type="journal article" date="2014" name="Peptides">
        <title>Scorpion venom peptides with no disulfide bridges: a review.</title>
        <authorList>
            <person name="Almaaytah A."/>
            <person name="Albalas Q."/>
        </authorList>
    </citation>
    <scope>NOMENCLATURE</scope>
</reference>
<sequence>MNKKTLLVIFFVTMLIVDEVNSFRFGSFLKKVWKSKLAKKLRSKGKQLLKDYANKVLNGPEEEAAAPAERRR</sequence>
<comment type="function">
    <text evidence="3">Amphipathic peptide that shows bradykinin potentiating activity and antimicrobial activities against bacteria and fungi. Has higher antibacterial activities against Gram-negative than against Gram-positive bacteria. Also inhibits NADPH oxidase-dependent superoxide production (IC(50) is 0.4 uM on granulocytes stimulated with PMA, IC(50) is 0.51 uM on HL-60 cells undifferentiated and IC(50) is 0.53 uM on HL-60 cells treated with DMSO). The C-terminal peptide shows a higher bradykinin potentiating activity than the complete peptide.</text>
</comment>
<comment type="subcellular location">
    <subcellularLocation>
        <location>Secreted</location>
    </subcellularLocation>
</comment>
<comment type="tissue specificity">
    <text>Expressed by the venom gland.</text>
</comment>
<comment type="miscellaneous">
    <text evidence="7">Shows a very weak hemolytic activity (6 uM causes only 3.5 % of hemolysis).</text>
</comment>
<comment type="miscellaneous">
    <text evidence="7">Shows a alpha-helical structure.</text>
</comment>
<comment type="miscellaneous">
    <text evidence="7">The genomic DNA coding for this protein is not a continuous sequence in the genome. The transcript of this protein may be generated by trans-splicing, by which exons from two independently transcribed pre-mRNAs are joined to form a single mature transcript (PubMed:22115565).</text>
</comment>
<comment type="similarity">
    <text evidence="6">Belongs to the non-disulfide-bridged peptide (NDBP) superfamily. Long chain multifunctional peptide (group 2) family.</text>
</comment>
<proteinExistence type="evidence at transcript level"/>
<accession>Q9Y0X4</accession>
<organism>
    <name type="scientific">Olivierus martensii</name>
    <name type="common">Manchurian scorpion</name>
    <name type="synonym">Mesobuthus martensii</name>
    <dbReference type="NCBI Taxonomy" id="34649"/>
    <lineage>
        <taxon>Eukaryota</taxon>
        <taxon>Metazoa</taxon>
        <taxon>Ecdysozoa</taxon>
        <taxon>Arthropoda</taxon>
        <taxon>Chelicerata</taxon>
        <taxon>Arachnida</taxon>
        <taxon>Scorpiones</taxon>
        <taxon>Buthida</taxon>
        <taxon>Buthoidea</taxon>
        <taxon>Buthidae</taxon>
        <taxon>Olivierus</taxon>
    </lineage>
</organism>
<protein>
    <recommendedName>
        <fullName>Bradykinin-potentiating peptide BmKbpp</fullName>
    </recommendedName>
    <alternativeName>
        <fullName>Bpp BmK3</fullName>
    </alternativeName>
    <alternativeName>
        <fullName evidence="5">Non-disulfide-bridged peptide 2.2</fullName>
        <shortName evidence="5">NDBP-2.2</shortName>
    </alternativeName>
    <alternativeName>
        <fullName evidence="4">Non-disulfide-bridged peptide 3.3</fullName>
        <shortName evidence="4">NDBP-3.3</shortName>
    </alternativeName>
</protein>
<keyword id="KW-0044">Antibiotic</keyword>
<keyword id="KW-0929">Antimicrobial</keyword>
<keyword id="KW-0165">Cleavage on pair of basic residues</keyword>
<keyword id="KW-0295">Fungicide</keyword>
<keyword id="KW-0382">Hypotensive agent</keyword>
<keyword id="KW-0481">Metalloenzyme inhibitor</keyword>
<keyword id="KW-0483">Metalloprotease inhibitor</keyword>
<keyword id="KW-0646">Protease inhibitor</keyword>
<keyword id="KW-0964">Secreted</keyword>
<keyword id="KW-0732">Signal</keyword>
<keyword id="KW-0800">Toxin</keyword>
<feature type="signal peptide" evidence="2">
    <location>
        <begin position="1"/>
        <end position="22"/>
    </location>
</feature>
<feature type="peptide" id="PRO_0000343194" description="Bradykinin-potentiating peptide BmKbpp">
    <location>
        <begin position="23"/>
        <end position="69"/>
    </location>
</feature>
<feature type="propeptide" id="PRO_0000343195" evidence="1">
    <location>
        <begin position="70"/>
        <end position="72"/>
    </location>
</feature>
<dbReference type="EMBL" id="AF146744">
    <property type="protein sequence ID" value="AAD39512.1"/>
    <property type="molecule type" value="mRNA"/>
</dbReference>
<dbReference type="EMBL" id="AF145952">
    <property type="protein sequence ID" value="AAF99563.1"/>
    <property type="molecule type" value="mRNA"/>
</dbReference>
<dbReference type="EMBL" id="AF145953">
    <property type="protein sequence ID" value="AAF99564.1"/>
    <property type="molecule type" value="mRNA"/>
</dbReference>
<dbReference type="SMR" id="Q9Y0X4"/>
<dbReference type="GO" id="GO:0005576">
    <property type="term" value="C:extracellular region"/>
    <property type="evidence" value="ECO:0007669"/>
    <property type="project" value="UniProtKB-SubCell"/>
</dbReference>
<dbReference type="GO" id="GO:0030414">
    <property type="term" value="F:peptidase inhibitor activity"/>
    <property type="evidence" value="ECO:0007669"/>
    <property type="project" value="UniProtKB-KW"/>
</dbReference>
<dbReference type="GO" id="GO:0090729">
    <property type="term" value="F:toxin activity"/>
    <property type="evidence" value="ECO:0007669"/>
    <property type="project" value="UniProtKB-KW"/>
</dbReference>
<dbReference type="GO" id="GO:0042742">
    <property type="term" value="P:defense response to bacterium"/>
    <property type="evidence" value="ECO:0007669"/>
    <property type="project" value="UniProtKB-KW"/>
</dbReference>
<dbReference type="GO" id="GO:0050832">
    <property type="term" value="P:defense response to fungus"/>
    <property type="evidence" value="ECO:0007669"/>
    <property type="project" value="UniProtKB-KW"/>
</dbReference>
<dbReference type="GO" id="GO:0031640">
    <property type="term" value="P:killing of cells of another organism"/>
    <property type="evidence" value="ECO:0007669"/>
    <property type="project" value="UniProtKB-KW"/>
</dbReference>
<dbReference type="GO" id="GO:0008217">
    <property type="term" value="P:regulation of blood pressure"/>
    <property type="evidence" value="ECO:0007669"/>
    <property type="project" value="UniProtKB-KW"/>
</dbReference>
<evidence type="ECO:0000250" key="1"/>
<evidence type="ECO:0000255" key="2"/>
<evidence type="ECO:0000269" key="3">
    <source>
    </source>
</evidence>
<evidence type="ECO:0000303" key="4">
    <source>
    </source>
</evidence>
<evidence type="ECO:0000303" key="5">
    <source>
    </source>
</evidence>
<evidence type="ECO:0000305" key="6"/>
<evidence type="ECO:0000305" key="7">
    <source>
    </source>
</evidence>